<gene>
    <name evidence="1" type="primary">rpsB</name>
    <name type="ordered locus">MXAN_5344</name>
</gene>
<sequence length="312" mass="34453">MAAAGGITMRQLLEAGVHFGHQTKRWNPKMKPFIFGARNGIYIIDLQKTVVMARSAFRFVADITARGGSVLFVGTKKQAQDVVREEASRAGQFFVTSRWLGGTLTNFKTIKQGIDRLKTLEKMAEDGTFERLPKKEVAQLEREREKLEKNLGGVKEMSKLPRCVFVIDPKKEHIAIHEAGRLGIPVIGLVDTNCDPDGIDFVIPGNDDAIRSIKLFTSKIAEACLEGAARYRASGAAERDEQEEREGRDDRGDRRDDRRGPRRGDRRDDRRDRGGDRGGDRRGPLVEMKGAAPVASAEPAAEAAPEGEAAAE</sequence>
<name>RS2_MYXXD</name>
<comment type="similarity">
    <text evidence="1">Belongs to the universal ribosomal protein uS2 family.</text>
</comment>
<feature type="chain" id="PRO_0000352017" description="Small ribosomal subunit protein uS2">
    <location>
        <begin position="1"/>
        <end position="312"/>
    </location>
</feature>
<feature type="region of interest" description="Disordered" evidence="2">
    <location>
        <begin position="232"/>
        <end position="312"/>
    </location>
</feature>
<feature type="compositionally biased region" description="Basic and acidic residues" evidence="2">
    <location>
        <begin position="245"/>
        <end position="284"/>
    </location>
</feature>
<feature type="compositionally biased region" description="Low complexity" evidence="2">
    <location>
        <begin position="291"/>
        <end position="312"/>
    </location>
</feature>
<keyword id="KW-1185">Reference proteome</keyword>
<keyword id="KW-0687">Ribonucleoprotein</keyword>
<keyword id="KW-0689">Ribosomal protein</keyword>
<dbReference type="EMBL" id="CP000113">
    <property type="protein sequence ID" value="ABF87442.1"/>
    <property type="molecule type" value="Genomic_DNA"/>
</dbReference>
<dbReference type="SMR" id="Q1D1H9"/>
<dbReference type="STRING" id="246197.MXAN_5344"/>
<dbReference type="EnsemblBacteria" id="ABF87442">
    <property type="protein sequence ID" value="ABF87442"/>
    <property type="gene ID" value="MXAN_5344"/>
</dbReference>
<dbReference type="KEGG" id="mxa:MXAN_5344"/>
<dbReference type="eggNOG" id="COG0052">
    <property type="taxonomic scope" value="Bacteria"/>
</dbReference>
<dbReference type="HOGENOM" id="CLU_040318_0_2_7"/>
<dbReference type="Proteomes" id="UP000002402">
    <property type="component" value="Chromosome"/>
</dbReference>
<dbReference type="GO" id="GO:0022627">
    <property type="term" value="C:cytosolic small ribosomal subunit"/>
    <property type="evidence" value="ECO:0007669"/>
    <property type="project" value="TreeGrafter"/>
</dbReference>
<dbReference type="GO" id="GO:0003735">
    <property type="term" value="F:structural constituent of ribosome"/>
    <property type="evidence" value="ECO:0007669"/>
    <property type="project" value="InterPro"/>
</dbReference>
<dbReference type="GO" id="GO:0006412">
    <property type="term" value="P:translation"/>
    <property type="evidence" value="ECO:0007669"/>
    <property type="project" value="UniProtKB-UniRule"/>
</dbReference>
<dbReference type="CDD" id="cd01425">
    <property type="entry name" value="RPS2"/>
    <property type="match status" value="1"/>
</dbReference>
<dbReference type="FunFam" id="1.10.287.610:FF:000001">
    <property type="entry name" value="30S ribosomal protein S2"/>
    <property type="match status" value="1"/>
</dbReference>
<dbReference type="Gene3D" id="3.40.50.10490">
    <property type="entry name" value="Glucose-6-phosphate isomerase like protein, domain 1"/>
    <property type="match status" value="1"/>
</dbReference>
<dbReference type="Gene3D" id="1.10.287.610">
    <property type="entry name" value="Helix hairpin bin"/>
    <property type="match status" value="1"/>
</dbReference>
<dbReference type="HAMAP" id="MF_00291_B">
    <property type="entry name" value="Ribosomal_uS2_B"/>
    <property type="match status" value="1"/>
</dbReference>
<dbReference type="InterPro" id="IPR001865">
    <property type="entry name" value="Ribosomal_uS2"/>
</dbReference>
<dbReference type="InterPro" id="IPR005706">
    <property type="entry name" value="Ribosomal_uS2_bac/mit/plastid"/>
</dbReference>
<dbReference type="InterPro" id="IPR018130">
    <property type="entry name" value="Ribosomal_uS2_CS"/>
</dbReference>
<dbReference type="InterPro" id="IPR023591">
    <property type="entry name" value="Ribosomal_uS2_flav_dom_sf"/>
</dbReference>
<dbReference type="NCBIfam" id="TIGR01011">
    <property type="entry name" value="rpsB_bact"/>
    <property type="match status" value="1"/>
</dbReference>
<dbReference type="PANTHER" id="PTHR12534">
    <property type="entry name" value="30S RIBOSOMAL PROTEIN S2 PROKARYOTIC AND ORGANELLAR"/>
    <property type="match status" value="1"/>
</dbReference>
<dbReference type="PANTHER" id="PTHR12534:SF0">
    <property type="entry name" value="SMALL RIBOSOMAL SUBUNIT PROTEIN US2M"/>
    <property type="match status" value="1"/>
</dbReference>
<dbReference type="Pfam" id="PF00318">
    <property type="entry name" value="Ribosomal_S2"/>
    <property type="match status" value="1"/>
</dbReference>
<dbReference type="PRINTS" id="PR00395">
    <property type="entry name" value="RIBOSOMALS2"/>
</dbReference>
<dbReference type="SUPFAM" id="SSF52313">
    <property type="entry name" value="Ribosomal protein S2"/>
    <property type="match status" value="1"/>
</dbReference>
<dbReference type="PROSITE" id="PS00962">
    <property type="entry name" value="RIBOSOMAL_S2_1"/>
    <property type="match status" value="1"/>
</dbReference>
<dbReference type="PROSITE" id="PS00963">
    <property type="entry name" value="RIBOSOMAL_S2_2"/>
    <property type="match status" value="1"/>
</dbReference>
<accession>Q1D1H9</accession>
<organism>
    <name type="scientific">Myxococcus xanthus (strain DK1622)</name>
    <dbReference type="NCBI Taxonomy" id="246197"/>
    <lineage>
        <taxon>Bacteria</taxon>
        <taxon>Pseudomonadati</taxon>
        <taxon>Myxococcota</taxon>
        <taxon>Myxococcia</taxon>
        <taxon>Myxococcales</taxon>
        <taxon>Cystobacterineae</taxon>
        <taxon>Myxococcaceae</taxon>
        <taxon>Myxococcus</taxon>
    </lineage>
</organism>
<proteinExistence type="inferred from homology"/>
<reference key="1">
    <citation type="journal article" date="2006" name="Proc. Natl. Acad. Sci. U.S.A.">
        <title>Evolution of sensory complexity recorded in a myxobacterial genome.</title>
        <authorList>
            <person name="Goldman B.S."/>
            <person name="Nierman W.C."/>
            <person name="Kaiser D."/>
            <person name="Slater S.C."/>
            <person name="Durkin A.S."/>
            <person name="Eisen J.A."/>
            <person name="Ronning C.M."/>
            <person name="Barbazuk W.B."/>
            <person name="Blanchard M."/>
            <person name="Field C."/>
            <person name="Halling C."/>
            <person name="Hinkle G."/>
            <person name="Iartchuk O."/>
            <person name="Kim H.S."/>
            <person name="Mackenzie C."/>
            <person name="Madupu R."/>
            <person name="Miller N."/>
            <person name="Shvartsbeyn A."/>
            <person name="Sullivan S.A."/>
            <person name="Vaudin M."/>
            <person name="Wiegand R."/>
            <person name="Kaplan H.B."/>
        </authorList>
    </citation>
    <scope>NUCLEOTIDE SEQUENCE [LARGE SCALE GENOMIC DNA]</scope>
    <source>
        <strain>DK1622</strain>
    </source>
</reference>
<evidence type="ECO:0000255" key="1">
    <source>
        <dbReference type="HAMAP-Rule" id="MF_00291"/>
    </source>
</evidence>
<evidence type="ECO:0000256" key="2">
    <source>
        <dbReference type="SAM" id="MobiDB-lite"/>
    </source>
</evidence>
<evidence type="ECO:0000305" key="3"/>
<protein>
    <recommendedName>
        <fullName evidence="1">Small ribosomal subunit protein uS2</fullName>
    </recommendedName>
    <alternativeName>
        <fullName evidence="3">30S ribosomal protein S2</fullName>
    </alternativeName>
</protein>